<sequence length="297" mass="33738">MLDNKDIATPSRTRALLDKYGFNFKKSLGQNFLIDVNIINNIIDASDIDAQTGVIEIGPGMGSLTEQLARHAKRVLAFEIDQRLIPVLNDTLSPYDNVTVINEDILKANIKEAVENHLQDCEKIMVVANLPYYITTPILLNLMQQDIPIDGYVVMMQKEVGERLNAEVGSKAYGSLSIVVQYYTETSKVLTVPKSVFMPPPNVDSIVVKLMQRTEPLVTVDNEEAFFKLAKAAFAQRRKTINNNYQNYFKDGKQHKEVILQWLEQAGIDPRRRGETLSIQDFAKLYEEKKKFPQLEN</sequence>
<dbReference type="EC" id="2.1.1.182" evidence="1"/>
<dbReference type="EMBL" id="AP009324">
    <property type="protein sequence ID" value="BAF77373.1"/>
    <property type="molecule type" value="Genomic_DNA"/>
</dbReference>
<dbReference type="RefSeq" id="WP_000886500.1">
    <property type="nucleotide sequence ID" value="NZ_CTYB01000022.1"/>
</dbReference>
<dbReference type="SMR" id="A7WYP0"/>
<dbReference type="KEGG" id="saw:SAHV_0490"/>
<dbReference type="HOGENOM" id="CLU_041220_0_0_9"/>
<dbReference type="GO" id="GO:0005829">
    <property type="term" value="C:cytosol"/>
    <property type="evidence" value="ECO:0007669"/>
    <property type="project" value="TreeGrafter"/>
</dbReference>
<dbReference type="GO" id="GO:0052908">
    <property type="term" value="F:16S rRNA (adenine(1518)-N(6)/adenine(1519)-N(6))-dimethyltransferase activity"/>
    <property type="evidence" value="ECO:0007669"/>
    <property type="project" value="UniProtKB-EC"/>
</dbReference>
<dbReference type="GO" id="GO:0003723">
    <property type="term" value="F:RNA binding"/>
    <property type="evidence" value="ECO:0007669"/>
    <property type="project" value="UniProtKB-KW"/>
</dbReference>
<dbReference type="CDD" id="cd02440">
    <property type="entry name" value="AdoMet_MTases"/>
    <property type="match status" value="1"/>
</dbReference>
<dbReference type="FunFam" id="1.10.8.100:FF:000002">
    <property type="entry name" value="Ribosomal RNA small subunit methyltransferase A"/>
    <property type="match status" value="1"/>
</dbReference>
<dbReference type="FunFam" id="3.40.50.150:FF:000023">
    <property type="entry name" value="Ribosomal RNA small subunit methyltransferase A"/>
    <property type="match status" value="1"/>
</dbReference>
<dbReference type="Gene3D" id="1.10.8.100">
    <property type="entry name" value="Ribosomal RNA adenine dimethylase-like, domain 2"/>
    <property type="match status" value="1"/>
</dbReference>
<dbReference type="Gene3D" id="3.40.50.150">
    <property type="entry name" value="Vaccinia Virus protein VP39"/>
    <property type="match status" value="1"/>
</dbReference>
<dbReference type="HAMAP" id="MF_00607">
    <property type="entry name" value="16SrRNA_methyltr_A"/>
    <property type="match status" value="1"/>
</dbReference>
<dbReference type="InterPro" id="IPR001737">
    <property type="entry name" value="KsgA/Erm"/>
</dbReference>
<dbReference type="InterPro" id="IPR023165">
    <property type="entry name" value="rRNA_Ade_diMease-like_C"/>
</dbReference>
<dbReference type="InterPro" id="IPR020596">
    <property type="entry name" value="rRNA_Ade_Mease_Trfase_CS"/>
</dbReference>
<dbReference type="InterPro" id="IPR020598">
    <property type="entry name" value="rRNA_Ade_methylase_Trfase_N"/>
</dbReference>
<dbReference type="InterPro" id="IPR011530">
    <property type="entry name" value="rRNA_adenine_dimethylase"/>
</dbReference>
<dbReference type="InterPro" id="IPR029063">
    <property type="entry name" value="SAM-dependent_MTases_sf"/>
</dbReference>
<dbReference type="NCBIfam" id="TIGR00755">
    <property type="entry name" value="ksgA"/>
    <property type="match status" value="1"/>
</dbReference>
<dbReference type="PANTHER" id="PTHR11727">
    <property type="entry name" value="DIMETHYLADENOSINE TRANSFERASE"/>
    <property type="match status" value="1"/>
</dbReference>
<dbReference type="PANTHER" id="PTHR11727:SF7">
    <property type="entry name" value="DIMETHYLADENOSINE TRANSFERASE-RELATED"/>
    <property type="match status" value="1"/>
</dbReference>
<dbReference type="Pfam" id="PF00398">
    <property type="entry name" value="RrnaAD"/>
    <property type="match status" value="1"/>
</dbReference>
<dbReference type="SMART" id="SM00650">
    <property type="entry name" value="rADc"/>
    <property type="match status" value="1"/>
</dbReference>
<dbReference type="SUPFAM" id="SSF53335">
    <property type="entry name" value="S-adenosyl-L-methionine-dependent methyltransferases"/>
    <property type="match status" value="1"/>
</dbReference>
<dbReference type="PROSITE" id="PS01131">
    <property type="entry name" value="RRNA_A_DIMETH"/>
    <property type="match status" value="1"/>
</dbReference>
<dbReference type="PROSITE" id="PS51689">
    <property type="entry name" value="SAM_RNA_A_N6_MT"/>
    <property type="match status" value="1"/>
</dbReference>
<organism>
    <name type="scientific">Staphylococcus aureus (strain Mu3 / ATCC 700698)</name>
    <dbReference type="NCBI Taxonomy" id="418127"/>
    <lineage>
        <taxon>Bacteria</taxon>
        <taxon>Bacillati</taxon>
        <taxon>Bacillota</taxon>
        <taxon>Bacilli</taxon>
        <taxon>Bacillales</taxon>
        <taxon>Staphylococcaceae</taxon>
        <taxon>Staphylococcus</taxon>
    </lineage>
</organism>
<comment type="function">
    <text evidence="1">Specifically dimethylates two adjacent adenosines (A1518 and A1519) in the loop of a conserved hairpin near the 3'-end of 16S rRNA in the 30S particle. May play a critical role in biogenesis of 30S subunits.</text>
</comment>
<comment type="catalytic activity">
    <reaction evidence="1">
        <text>adenosine(1518)/adenosine(1519) in 16S rRNA + 4 S-adenosyl-L-methionine = N(6)-dimethyladenosine(1518)/N(6)-dimethyladenosine(1519) in 16S rRNA + 4 S-adenosyl-L-homocysteine + 4 H(+)</text>
        <dbReference type="Rhea" id="RHEA:19609"/>
        <dbReference type="Rhea" id="RHEA-COMP:10232"/>
        <dbReference type="Rhea" id="RHEA-COMP:10233"/>
        <dbReference type="ChEBI" id="CHEBI:15378"/>
        <dbReference type="ChEBI" id="CHEBI:57856"/>
        <dbReference type="ChEBI" id="CHEBI:59789"/>
        <dbReference type="ChEBI" id="CHEBI:74411"/>
        <dbReference type="ChEBI" id="CHEBI:74493"/>
        <dbReference type="EC" id="2.1.1.182"/>
    </reaction>
</comment>
<comment type="subcellular location">
    <subcellularLocation>
        <location evidence="1">Cytoplasm</location>
    </subcellularLocation>
</comment>
<comment type="similarity">
    <text evidence="1">Belongs to the class I-like SAM-binding methyltransferase superfamily. rRNA adenine N(6)-methyltransferase family. RsmA subfamily.</text>
</comment>
<gene>
    <name evidence="1" type="primary">rsmA</name>
    <name evidence="1" type="synonym">ksgA</name>
    <name type="ordered locus">SAHV_0490</name>
</gene>
<reference key="1">
    <citation type="journal article" date="2008" name="Antimicrob. Agents Chemother.">
        <title>Mutated response regulator graR is responsible for phenotypic conversion of Staphylococcus aureus from heterogeneous vancomycin-intermediate resistance to vancomycin-intermediate resistance.</title>
        <authorList>
            <person name="Neoh H.-M."/>
            <person name="Cui L."/>
            <person name="Yuzawa H."/>
            <person name="Takeuchi F."/>
            <person name="Matsuo M."/>
            <person name="Hiramatsu K."/>
        </authorList>
    </citation>
    <scope>NUCLEOTIDE SEQUENCE [LARGE SCALE GENOMIC DNA]</scope>
    <source>
        <strain>Mu3 / ATCC 700698</strain>
    </source>
</reference>
<name>RSMA_STAA1</name>
<feature type="chain" id="PRO_1000056678" description="Ribosomal RNA small subunit methyltransferase A">
    <location>
        <begin position="1"/>
        <end position="297"/>
    </location>
</feature>
<feature type="binding site" evidence="1">
    <location>
        <position position="31"/>
    </location>
    <ligand>
        <name>S-adenosyl-L-methionine</name>
        <dbReference type="ChEBI" id="CHEBI:59789"/>
    </ligand>
</feature>
<feature type="binding site" evidence="1">
    <location>
        <position position="33"/>
    </location>
    <ligand>
        <name>S-adenosyl-L-methionine</name>
        <dbReference type="ChEBI" id="CHEBI:59789"/>
    </ligand>
</feature>
<feature type="binding site" evidence="1">
    <location>
        <position position="58"/>
    </location>
    <ligand>
        <name>S-adenosyl-L-methionine</name>
        <dbReference type="ChEBI" id="CHEBI:59789"/>
    </ligand>
</feature>
<feature type="binding site" evidence="1">
    <location>
        <position position="79"/>
    </location>
    <ligand>
        <name>S-adenosyl-L-methionine</name>
        <dbReference type="ChEBI" id="CHEBI:59789"/>
    </ligand>
</feature>
<feature type="binding site" evidence="1">
    <location>
        <position position="104"/>
    </location>
    <ligand>
        <name>S-adenosyl-L-methionine</name>
        <dbReference type="ChEBI" id="CHEBI:59789"/>
    </ligand>
</feature>
<feature type="binding site" evidence="1">
    <location>
        <position position="129"/>
    </location>
    <ligand>
        <name>S-adenosyl-L-methionine</name>
        <dbReference type="ChEBI" id="CHEBI:59789"/>
    </ligand>
</feature>
<evidence type="ECO:0000255" key="1">
    <source>
        <dbReference type="HAMAP-Rule" id="MF_00607"/>
    </source>
</evidence>
<accession>A7WYP0</accession>
<keyword id="KW-0963">Cytoplasm</keyword>
<keyword id="KW-0489">Methyltransferase</keyword>
<keyword id="KW-0694">RNA-binding</keyword>
<keyword id="KW-0698">rRNA processing</keyword>
<keyword id="KW-0949">S-adenosyl-L-methionine</keyword>
<keyword id="KW-0808">Transferase</keyword>
<proteinExistence type="inferred from homology"/>
<protein>
    <recommendedName>
        <fullName evidence="1">Ribosomal RNA small subunit methyltransferase A</fullName>
        <ecNumber evidence="1">2.1.1.182</ecNumber>
    </recommendedName>
    <alternativeName>
        <fullName evidence="1">16S rRNA (adenine(1518)-N(6)/adenine(1519)-N(6))-dimethyltransferase</fullName>
    </alternativeName>
    <alternativeName>
        <fullName evidence="1">16S rRNA dimethyladenosine transferase</fullName>
    </alternativeName>
    <alternativeName>
        <fullName evidence="1">16S rRNA dimethylase</fullName>
    </alternativeName>
    <alternativeName>
        <fullName evidence="1">S-adenosylmethionine-6-N', N'-adenosyl(rRNA) dimethyltransferase</fullName>
    </alternativeName>
</protein>